<keyword id="KW-0131">Cell cycle</keyword>
<keyword id="KW-0132">Cell division</keyword>
<keyword id="KW-0997">Cell inner membrane</keyword>
<keyword id="KW-1003">Cell membrane</keyword>
<keyword id="KW-0472">Membrane</keyword>
<keyword id="KW-1185">Reference proteome</keyword>
<keyword id="KW-0812">Transmembrane</keyword>
<keyword id="KW-1133">Transmembrane helix</keyword>
<reference key="1">
    <citation type="submission" date="2009-01" db="EMBL/GenBank/DDBJ databases">
        <title>Complete sequence of Geobacter sp. FRC-32.</title>
        <authorList>
            <consortium name="US DOE Joint Genome Institute"/>
            <person name="Lucas S."/>
            <person name="Copeland A."/>
            <person name="Lapidus A."/>
            <person name="Glavina del Rio T."/>
            <person name="Dalin E."/>
            <person name="Tice H."/>
            <person name="Bruce D."/>
            <person name="Goodwin L."/>
            <person name="Pitluck S."/>
            <person name="Saunders E."/>
            <person name="Brettin T."/>
            <person name="Detter J.C."/>
            <person name="Han C."/>
            <person name="Larimer F."/>
            <person name="Land M."/>
            <person name="Hauser L."/>
            <person name="Kyrpides N."/>
            <person name="Ovchinnikova G."/>
            <person name="Kostka J."/>
            <person name="Richardson P."/>
        </authorList>
    </citation>
    <scope>NUCLEOTIDE SEQUENCE [LARGE SCALE GENOMIC DNA]</scope>
    <source>
        <strain>DSM 22248 / JCM 15807 / FRC-32</strain>
    </source>
</reference>
<sequence>MRDLHKKKPRPVTQNRLKKPPKTCKPINYRGILKKTAKVVGGAALISAVGCAGYGIYRIIAGTTFFKLERIEVSELKTLKRQEIIDLAGVREGDGMFGLRLRSIGEQIGKNPWVSRVEVRRYLPNTLSMQIAERQPVAVINMGYLYYLDANGDVFKPLTEGDQLDYPVITGISEEDIARDPAGSKGALKEVLELIAHLKSRADFKLDEVSEIHYDKGYGVTLFTAAAGVPVKLGSGDYSRKLDRLARIYKELQTQISVLEYIDLDYSDKIIVKKV</sequence>
<evidence type="ECO:0000255" key="1">
    <source>
        <dbReference type="HAMAP-Rule" id="MF_00911"/>
    </source>
</evidence>
<evidence type="ECO:0000255" key="2">
    <source>
        <dbReference type="PROSITE-ProRule" id="PRU01115"/>
    </source>
</evidence>
<evidence type="ECO:0000256" key="3">
    <source>
        <dbReference type="SAM" id="MobiDB-lite"/>
    </source>
</evidence>
<gene>
    <name evidence="1" type="primary">ftsQ</name>
    <name type="ordered locus">Geob_0784</name>
</gene>
<name>FTSQ_GEODF</name>
<dbReference type="EMBL" id="CP001390">
    <property type="protein sequence ID" value="ACM19146.1"/>
    <property type="molecule type" value="Genomic_DNA"/>
</dbReference>
<dbReference type="RefSeq" id="WP_012645875.1">
    <property type="nucleotide sequence ID" value="NC_011979.1"/>
</dbReference>
<dbReference type="SMR" id="B9M176"/>
<dbReference type="STRING" id="316067.Geob_0784"/>
<dbReference type="KEGG" id="geo:Geob_0784"/>
<dbReference type="eggNOG" id="COG1589">
    <property type="taxonomic scope" value="Bacteria"/>
</dbReference>
<dbReference type="HOGENOM" id="CLU_047677_3_0_7"/>
<dbReference type="OrthoDB" id="5510599at2"/>
<dbReference type="Proteomes" id="UP000007721">
    <property type="component" value="Chromosome"/>
</dbReference>
<dbReference type="GO" id="GO:0032153">
    <property type="term" value="C:cell division site"/>
    <property type="evidence" value="ECO:0007669"/>
    <property type="project" value="UniProtKB-UniRule"/>
</dbReference>
<dbReference type="GO" id="GO:0005886">
    <property type="term" value="C:plasma membrane"/>
    <property type="evidence" value="ECO:0007669"/>
    <property type="project" value="UniProtKB-SubCell"/>
</dbReference>
<dbReference type="GO" id="GO:0090529">
    <property type="term" value="P:cell septum assembly"/>
    <property type="evidence" value="ECO:0007669"/>
    <property type="project" value="InterPro"/>
</dbReference>
<dbReference type="GO" id="GO:0043093">
    <property type="term" value="P:FtsZ-dependent cytokinesis"/>
    <property type="evidence" value="ECO:0007669"/>
    <property type="project" value="UniProtKB-UniRule"/>
</dbReference>
<dbReference type="Gene3D" id="3.40.50.11690">
    <property type="entry name" value="Cell division protein FtsQ/DivIB"/>
    <property type="match status" value="1"/>
</dbReference>
<dbReference type="Gene3D" id="3.10.20.310">
    <property type="entry name" value="membrane protein fhac"/>
    <property type="match status" value="1"/>
</dbReference>
<dbReference type="HAMAP" id="MF_00911">
    <property type="entry name" value="FtsQ_subfam"/>
    <property type="match status" value="1"/>
</dbReference>
<dbReference type="InterPro" id="IPR005548">
    <property type="entry name" value="Cell_div_FtsQ/DivIB_C"/>
</dbReference>
<dbReference type="InterPro" id="IPR026579">
    <property type="entry name" value="FtsQ"/>
</dbReference>
<dbReference type="InterPro" id="IPR045335">
    <property type="entry name" value="FtsQ_C_sf"/>
</dbReference>
<dbReference type="InterPro" id="IPR034746">
    <property type="entry name" value="POTRA"/>
</dbReference>
<dbReference type="InterPro" id="IPR013685">
    <property type="entry name" value="POTRA_FtsQ_type"/>
</dbReference>
<dbReference type="PANTHER" id="PTHR35851">
    <property type="entry name" value="CELL DIVISION PROTEIN FTSQ"/>
    <property type="match status" value="1"/>
</dbReference>
<dbReference type="PANTHER" id="PTHR35851:SF1">
    <property type="entry name" value="CELL DIVISION PROTEIN FTSQ"/>
    <property type="match status" value="1"/>
</dbReference>
<dbReference type="Pfam" id="PF03799">
    <property type="entry name" value="FtsQ_DivIB_C"/>
    <property type="match status" value="1"/>
</dbReference>
<dbReference type="Pfam" id="PF08478">
    <property type="entry name" value="POTRA_1"/>
    <property type="match status" value="1"/>
</dbReference>
<dbReference type="PROSITE" id="PS51779">
    <property type="entry name" value="POTRA"/>
    <property type="match status" value="1"/>
</dbReference>
<accession>B9M176</accession>
<proteinExistence type="inferred from homology"/>
<protein>
    <recommendedName>
        <fullName evidence="1">Cell division protein FtsQ</fullName>
    </recommendedName>
</protein>
<feature type="chain" id="PRO_0000414668" description="Cell division protein FtsQ">
    <location>
        <begin position="1"/>
        <end position="275"/>
    </location>
</feature>
<feature type="topological domain" description="Cytoplasmic" evidence="1">
    <location>
        <begin position="1"/>
        <end position="38"/>
    </location>
</feature>
<feature type="transmembrane region" description="Helical" evidence="1">
    <location>
        <begin position="39"/>
        <end position="61"/>
    </location>
</feature>
<feature type="topological domain" description="Periplasmic" evidence="1">
    <location>
        <begin position="62"/>
        <end position="275"/>
    </location>
</feature>
<feature type="domain" description="POTRA" evidence="2">
    <location>
        <begin position="66"/>
        <end position="134"/>
    </location>
</feature>
<feature type="region of interest" description="Disordered" evidence="3">
    <location>
        <begin position="1"/>
        <end position="20"/>
    </location>
</feature>
<organism>
    <name type="scientific">Geotalea daltonii (strain DSM 22248 / JCM 15807 / FRC-32)</name>
    <name type="common">Geobacter daltonii</name>
    <dbReference type="NCBI Taxonomy" id="316067"/>
    <lineage>
        <taxon>Bacteria</taxon>
        <taxon>Pseudomonadati</taxon>
        <taxon>Thermodesulfobacteriota</taxon>
        <taxon>Desulfuromonadia</taxon>
        <taxon>Geobacterales</taxon>
        <taxon>Geobacteraceae</taxon>
        <taxon>Geotalea</taxon>
    </lineage>
</organism>
<comment type="function">
    <text evidence="1">Essential cell division protein.</text>
</comment>
<comment type="subcellular location">
    <subcellularLocation>
        <location evidence="1">Cell inner membrane</location>
        <topology evidence="1">Single-pass type II membrane protein</topology>
    </subcellularLocation>
    <text evidence="1">Localizes to the division septum.</text>
</comment>
<comment type="similarity">
    <text evidence="1">Belongs to the FtsQ/DivIB family. FtsQ subfamily.</text>
</comment>